<organism>
    <name type="scientific">Caenorhabditis elegans</name>
    <dbReference type="NCBI Taxonomy" id="6239"/>
    <lineage>
        <taxon>Eukaryota</taxon>
        <taxon>Metazoa</taxon>
        <taxon>Ecdysozoa</taxon>
        <taxon>Nematoda</taxon>
        <taxon>Chromadorea</taxon>
        <taxon>Rhabditida</taxon>
        <taxon>Rhabditina</taxon>
        <taxon>Rhabditomorpha</taxon>
        <taxon>Rhabditoidea</taxon>
        <taxon>Rhabditidae</taxon>
        <taxon>Peloderinae</taxon>
        <taxon>Caenorhabditis</taxon>
    </lineage>
</organism>
<reference key="1">
    <citation type="journal article" date="1995" name="J. Mol. Biol.">
        <title>Exclusive expression of C. elegans osm-3 kinesin gene in chemosensory neurons open to the external environment.</title>
        <authorList>
            <person name="Tabish M."/>
            <person name="Siddiqui Z.K."/>
            <person name="Nishikawa K."/>
            <person name="Siddiqui S.S."/>
        </authorList>
    </citation>
    <scope>NUCLEOTIDE SEQUENCE [GENOMIC DNA]</scope>
    <scope>FUNCTION</scope>
    <scope>TISSUE SPECIFICITY</scope>
    <scope>DISRUPTION PHENOTYPE</scope>
    <source>
        <strain>Bristol N2</strain>
    </source>
</reference>
<reference key="2">
    <citation type="journal article" date="1998" name="Science">
        <title>Genome sequence of the nematode C. elegans: a platform for investigating biology.</title>
        <authorList>
            <consortium name="The C. elegans sequencing consortium"/>
        </authorList>
    </citation>
    <scope>NUCLEOTIDE SEQUENCE [LARGE SCALE GENOMIC DNA]</scope>
    <source>
        <strain>Bristol N2</strain>
    </source>
</reference>
<reference key="3">
    <citation type="journal article" date="1993" name="NeuroReport">
        <title>C. elegans osm-3 gene mediating osmotic avoidance behaviour encodes a kinesin-like protein.</title>
        <authorList>
            <person name="Shakir M.A."/>
            <person name="Fukushige T."/>
            <person name="Yasuda H."/>
            <person name="Miwa J."/>
            <person name="Siddiqui S.S."/>
        </authorList>
    </citation>
    <scope>PRELIMINARY NUCLEOTIDE SEQUENCE [GENOMIC DNA] OF 1-397</scope>
    <scope>FUNCTION</scope>
    <scope>TISSUE SPECIFICITY</scope>
    <scope>DISRUPTION PHENOTYPE</scope>
    <source>
        <strain>Bristol N2</strain>
    </source>
</reference>
<reference key="4">
    <citation type="journal article" date="2006" name="J. Cell Biol.">
        <title>Mechanism of transport of IFT particles in C. elegans cilia by the concerted action of kinesin-II and OSM-3 motors.</title>
        <authorList>
            <person name="Pan X."/>
            <person name="Ou G."/>
            <person name="Civelekoglu-Scholey G."/>
            <person name="Blacque O.E."/>
            <person name="Endres N.F."/>
            <person name="Tao L."/>
            <person name="Mogilner A."/>
            <person name="Leroux M.R."/>
            <person name="Vale R.D."/>
            <person name="Scholey J.M."/>
        </authorList>
    </citation>
    <scope>FUNCTION</scope>
    <scope>MUTAGENESIS OF GLY-444</scope>
</reference>
<reference key="5">
    <citation type="journal article" date="2007" name="Proc. Natl. Acad. Sci. U.S.A.">
        <title>Mutation of the MAP kinase DYF-5 affects docking and undocking of kinesin-2 motors and reduces their speed in the cilia of Caenorhabditis elegans.</title>
        <authorList>
            <person name="Burghoorn J."/>
            <person name="Dekkers M.P."/>
            <person name="Rademakers S."/>
            <person name="de Jong T."/>
            <person name="Willemsen R."/>
            <person name="Jansen G."/>
        </authorList>
    </citation>
    <scope>FUNCTION</scope>
    <scope>SUBCELLULAR LOCATION</scope>
    <scope>TISSUE SPECIFICITY</scope>
</reference>
<reference key="6">
    <citation type="journal article" date="2016" name="Dev. Cell">
        <title>A Conserved role for girdin in basal body positioning and ciliogenesis.</title>
        <authorList>
            <person name="Nechipurenko I.V."/>
            <person name="Olivier-Mason A."/>
            <person name="Kazatskaya A."/>
            <person name="Kennedy J."/>
            <person name="McLachlan I.G."/>
            <person name="Heiman M.G."/>
            <person name="Blacque O.E."/>
            <person name="Sengupta P."/>
        </authorList>
    </citation>
    <scope>SUBCELLULAR LOCATION</scope>
</reference>
<reference key="7">
    <citation type="journal article" date="2017" name="Curr. Biol.">
        <title>Dynein-driven retrograde intraflagellar transport is triphasic in C. elegans sensory cilia.</title>
        <authorList>
            <person name="Yi P."/>
            <person name="Li W.J."/>
            <person name="Dong M.Q."/>
            <person name="Ou G."/>
        </authorList>
    </citation>
    <scope>SUBCELLULAR LOCATION</scope>
</reference>
<dbReference type="EMBL" id="D38632">
    <property type="protein sequence ID" value="BAA07612.1"/>
    <property type="status" value="ALT_SEQ"/>
    <property type="molecule type" value="Genomic_DNA"/>
</dbReference>
<dbReference type="EMBL" id="FO081251">
    <property type="protein sequence ID" value="CCD70203.1"/>
    <property type="molecule type" value="Genomic_DNA"/>
</dbReference>
<dbReference type="EMBL" id="FO081251">
    <property type="protein sequence ID" value="CCD70204.1"/>
    <property type="molecule type" value="Genomic_DNA"/>
</dbReference>
<dbReference type="EMBL" id="D14968">
    <property type="protein sequence ID" value="BAA20996.1"/>
    <property type="status" value="ALT_SEQ"/>
    <property type="molecule type" value="Genomic_DNA"/>
</dbReference>
<dbReference type="PIR" id="S54351">
    <property type="entry name" value="S54351"/>
</dbReference>
<dbReference type="RefSeq" id="NP_001023308.1">
    <property type="nucleotide sequence ID" value="NM_001028137.3"/>
</dbReference>
<dbReference type="RefSeq" id="NP_001367795.1">
    <molecule id="P46873-2"/>
    <property type="nucleotide sequence ID" value="NM_001380164.2"/>
</dbReference>
<dbReference type="RefSeq" id="NP_001367796.1">
    <molecule id="P46873-1"/>
    <property type="nucleotide sequence ID" value="NM_001380163.1"/>
</dbReference>
<dbReference type="RefSeq" id="NP_741362.1">
    <property type="nucleotide sequence ID" value="NM_171308.4"/>
</dbReference>
<dbReference type="PDB" id="7A3Z">
    <property type="method" value="X-ray"/>
    <property type="resolution" value="2.10 A"/>
    <property type="chains" value="A=2-362"/>
</dbReference>
<dbReference type="PDB" id="7A40">
    <property type="method" value="X-ray"/>
    <property type="resolution" value="2.30 A"/>
    <property type="chains" value="A/B=2-337"/>
</dbReference>
<dbReference type="PDB" id="7A5E">
    <property type="method" value="X-ray"/>
    <property type="resolution" value="1.90 A"/>
    <property type="chains" value="A/B=2-337"/>
</dbReference>
<dbReference type="PDBsum" id="7A3Z"/>
<dbReference type="PDBsum" id="7A40"/>
<dbReference type="PDBsum" id="7A5E"/>
<dbReference type="SMR" id="P46873"/>
<dbReference type="BioGRID" id="42280">
    <property type="interactions" value="7"/>
</dbReference>
<dbReference type="DIP" id="DIP-26512N"/>
<dbReference type="FunCoup" id="P46873">
    <property type="interactions" value="68"/>
</dbReference>
<dbReference type="STRING" id="6239.M02B7.3b.1"/>
<dbReference type="PaxDb" id="6239-M02B7.3b"/>
<dbReference type="EnsemblMetazoa" id="M02B7.3a.1">
    <molecule id="P46873-2"/>
    <property type="protein sequence ID" value="M02B7.3a.1"/>
    <property type="gene ID" value="WBGene00003884"/>
</dbReference>
<dbReference type="EnsemblMetazoa" id="M02B7.3a.2">
    <molecule id="P46873-2"/>
    <property type="protein sequence ID" value="M02B7.3a.2"/>
    <property type="gene ID" value="WBGene00003884"/>
</dbReference>
<dbReference type="EnsemblMetazoa" id="M02B7.3a.3">
    <molecule id="P46873-2"/>
    <property type="protein sequence ID" value="M02B7.3a.3"/>
    <property type="gene ID" value="WBGene00003884"/>
</dbReference>
<dbReference type="EnsemblMetazoa" id="M02B7.3b.1">
    <molecule id="P46873-1"/>
    <property type="protein sequence ID" value="M02B7.3b.1"/>
    <property type="gene ID" value="WBGene00003884"/>
</dbReference>
<dbReference type="GeneID" id="177141"/>
<dbReference type="UCSC" id="M02B7.3b">
    <molecule id="P46873-1"/>
    <property type="organism name" value="c. elegans"/>
</dbReference>
<dbReference type="AGR" id="WB:WBGene00003884"/>
<dbReference type="WormBase" id="M02B7.3a">
    <molecule id="P46873-2"/>
    <property type="protein sequence ID" value="CE31567"/>
    <property type="gene ID" value="WBGene00003884"/>
    <property type="gene designation" value="osm-3"/>
</dbReference>
<dbReference type="WormBase" id="M02B7.3b">
    <molecule id="P46873-1"/>
    <property type="protein sequence ID" value="CE31568"/>
    <property type="gene ID" value="WBGene00003884"/>
    <property type="gene designation" value="osm-3"/>
</dbReference>
<dbReference type="eggNOG" id="KOG4280">
    <property type="taxonomic scope" value="Eukaryota"/>
</dbReference>
<dbReference type="GeneTree" id="ENSGT00940000158776"/>
<dbReference type="HOGENOM" id="CLU_001485_22_5_1"/>
<dbReference type="InParanoid" id="P46873"/>
<dbReference type="OMA" id="QCKTGAF"/>
<dbReference type="OrthoDB" id="3176171at2759"/>
<dbReference type="PhylomeDB" id="P46873"/>
<dbReference type="Reactome" id="R-CEL-5620924">
    <property type="pathway name" value="Intraflagellar transport"/>
</dbReference>
<dbReference type="PRO" id="PR:P46873"/>
<dbReference type="Proteomes" id="UP000001940">
    <property type="component" value="Chromosome IV"/>
</dbReference>
<dbReference type="Bgee" id="WBGene00003884">
    <property type="expression patterns" value="Expressed in pharyngeal muscle cell (C elegans) and 3 other cell types or tissues"/>
</dbReference>
<dbReference type="GO" id="GO:0036064">
    <property type="term" value="C:ciliary basal body"/>
    <property type="evidence" value="ECO:0000314"/>
    <property type="project" value="UniProtKB"/>
</dbReference>
<dbReference type="GO" id="GO:0005929">
    <property type="term" value="C:cilium"/>
    <property type="evidence" value="ECO:0000318"/>
    <property type="project" value="GO_Central"/>
</dbReference>
<dbReference type="GO" id="GO:0005737">
    <property type="term" value="C:cytoplasm"/>
    <property type="evidence" value="ECO:0000318"/>
    <property type="project" value="GO_Central"/>
</dbReference>
<dbReference type="GO" id="GO:0030425">
    <property type="term" value="C:dendrite"/>
    <property type="evidence" value="ECO:0000314"/>
    <property type="project" value="WormBase"/>
</dbReference>
<dbReference type="GO" id="GO:0032839">
    <property type="term" value="C:dendrite cytoplasm"/>
    <property type="evidence" value="ECO:0007669"/>
    <property type="project" value="GOC"/>
</dbReference>
<dbReference type="GO" id="GO:0005871">
    <property type="term" value="C:kinesin complex"/>
    <property type="evidence" value="ECO:0000314"/>
    <property type="project" value="WormBase"/>
</dbReference>
<dbReference type="GO" id="GO:0005874">
    <property type="term" value="C:microtubule"/>
    <property type="evidence" value="ECO:0000318"/>
    <property type="project" value="GO_Central"/>
</dbReference>
<dbReference type="GO" id="GO:0005815">
    <property type="term" value="C:microtubule organizing center"/>
    <property type="evidence" value="ECO:0000318"/>
    <property type="project" value="GO_Central"/>
</dbReference>
<dbReference type="GO" id="GO:0043005">
    <property type="term" value="C:neuron projection"/>
    <property type="evidence" value="ECO:0000318"/>
    <property type="project" value="GO_Central"/>
</dbReference>
<dbReference type="GO" id="GO:0043025">
    <property type="term" value="C:neuronal cell body"/>
    <property type="evidence" value="ECO:0000314"/>
    <property type="project" value="WormBase"/>
</dbReference>
<dbReference type="GO" id="GO:0097730">
    <property type="term" value="C:non-motile cilium"/>
    <property type="evidence" value="ECO:0000314"/>
    <property type="project" value="UniProtKB"/>
</dbReference>
<dbReference type="GO" id="GO:0048471">
    <property type="term" value="C:perinuclear region of cytoplasm"/>
    <property type="evidence" value="ECO:0000314"/>
    <property type="project" value="WormBase"/>
</dbReference>
<dbReference type="GO" id="GO:0005524">
    <property type="term" value="F:ATP binding"/>
    <property type="evidence" value="ECO:0007669"/>
    <property type="project" value="UniProtKB-KW"/>
</dbReference>
<dbReference type="GO" id="GO:0016887">
    <property type="term" value="F:ATP hydrolysis activity"/>
    <property type="evidence" value="ECO:0000318"/>
    <property type="project" value="GO_Central"/>
</dbReference>
<dbReference type="GO" id="GO:0008017">
    <property type="term" value="F:microtubule binding"/>
    <property type="evidence" value="ECO:0000318"/>
    <property type="project" value="GO_Central"/>
</dbReference>
<dbReference type="GO" id="GO:0003777">
    <property type="term" value="F:microtubule motor activity"/>
    <property type="evidence" value="ECO:0000314"/>
    <property type="project" value="WormBase"/>
</dbReference>
<dbReference type="GO" id="GO:0008574">
    <property type="term" value="F:plus-end-directed microtubule motor activity"/>
    <property type="evidence" value="ECO:0000314"/>
    <property type="project" value="WormBase"/>
</dbReference>
<dbReference type="GO" id="GO:0098971">
    <property type="term" value="P:anterograde dendritic transport of neurotransmitter receptor complex"/>
    <property type="evidence" value="ECO:0000318"/>
    <property type="project" value="GO_Central"/>
</dbReference>
<dbReference type="GO" id="GO:0030030">
    <property type="term" value="P:cell projection organization"/>
    <property type="evidence" value="ECO:0000318"/>
    <property type="project" value="GO_Central"/>
</dbReference>
<dbReference type="GO" id="GO:0060271">
    <property type="term" value="P:cilium assembly"/>
    <property type="evidence" value="ECO:0000316"/>
    <property type="project" value="UniProtKB"/>
</dbReference>
<dbReference type="GO" id="GO:0043053">
    <property type="term" value="P:dauer entry"/>
    <property type="evidence" value="ECO:0000316"/>
    <property type="project" value="UniProtKB"/>
</dbReference>
<dbReference type="GO" id="GO:0035720">
    <property type="term" value="P:intraciliary anterograde transport"/>
    <property type="evidence" value="ECO:0000314"/>
    <property type="project" value="WormBase"/>
</dbReference>
<dbReference type="GO" id="GO:0042073">
    <property type="term" value="P:intraciliary transport"/>
    <property type="evidence" value="ECO:0000314"/>
    <property type="project" value="UniProtKB"/>
</dbReference>
<dbReference type="GO" id="GO:1902856">
    <property type="term" value="P:negative regulation of non-motile cilium assembly"/>
    <property type="evidence" value="ECO:0000316"/>
    <property type="project" value="UniProtKB"/>
</dbReference>
<dbReference type="GO" id="GO:1905515">
    <property type="term" value="P:non-motile cilium assembly"/>
    <property type="evidence" value="ECO:0000316"/>
    <property type="project" value="WormBase"/>
</dbReference>
<dbReference type="GO" id="GO:0061066">
    <property type="term" value="P:positive regulation of dauer larval development"/>
    <property type="evidence" value="ECO:0000315"/>
    <property type="project" value="UniProtKB"/>
</dbReference>
<dbReference type="GO" id="GO:1902857">
    <property type="term" value="P:positive regulation of non-motile cilium assembly"/>
    <property type="evidence" value="ECO:0000315"/>
    <property type="project" value="UniProtKB"/>
</dbReference>
<dbReference type="GO" id="GO:0046626">
    <property type="term" value="P:regulation of insulin receptor signaling pathway"/>
    <property type="evidence" value="ECO:0000316"/>
    <property type="project" value="WormBase"/>
</dbReference>
<dbReference type="FunFam" id="3.40.850.10:FF:000029">
    <property type="entry name" value="Kinesin-like protein KIF17"/>
    <property type="match status" value="1"/>
</dbReference>
<dbReference type="Gene3D" id="3.40.850.10">
    <property type="entry name" value="Kinesin motor domain"/>
    <property type="match status" value="1"/>
</dbReference>
<dbReference type="InterPro" id="IPR027640">
    <property type="entry name" value="Kinesin-like_fam"/>
</dbReference>
<dbReference type="InterPro" id="IPR019821">
    <property type="entry name" value="Kinesin_motor_CS"/>
</dbReference>
<dbReference type="InterPro" id="IPR001752">
    <property type="entry name" value="Kinesin_motor_dom"/>
</dbReference>
<dbReference type="InterPro" id="IPR036961">
    <property type="entry name" value="Kinesin_motor_dom_sf"/>
</dbReference>
<dbReference type="InterPro" id="IPR027417">
    <property type="entry name" value="P-loop_NTPase"/>
</dbReference>
<dbReference type="PANTHER" id="PTHR47969">
    <property type="entry name" value="CHROMOSOME-ASSOCIATED KINESIN KIF4A-RELATED"/>
    <property type="match status" value="1"/>
</dbReference>
<dbReference type="PANTHER" id="PTHR47969:SF21">
    <property type="entry name" value="KINESIN-LIKE PROTEIN"/>
    <property type="match status" value="1"/>
</dbReference>
<dbReference type="Pfam" id="PF00225">
    <property type="entry name" value="Kinesin"/>
    <property type="match status" value="1"/>
</dbReference>
<dbReference type="PRINTS" id="PR00380">
    <property type="entry name" value="KINESINHEAVY"/>
</dbReference>
<dbReference type="SMART" id="SM00129">
    <property type="entry name" value="KISc"/>
    <property type="match status" value="1"/>
</dbReference>
<dbReference type="SUPFAM" id="SSF52540">
    <property type="entry name" value="P-loop containing nucleoside triphosphate hydrolases"/>
    <property type="match status" value="1"/>
</dbReference>
<dbReference type="PROSITE" id="PS00411">
    <property type="entry name" value="KINESIN_MOTOR_1"/>
    <property type="match status" value="1"/>
</dbReference>
<dbReference type="PROSITE" id="PS50067">
    <property type="entry name" value="KINESIN_MOTOR_2"/>
    <property type="match status" value="1"/>
</dbReference>
<accession>P46873</accession>
<accession>Q8MPT7</accession>
<accession>Q8MPT8</accession>
<evidence type="ECO:0000255" key="1"/>
<evidence type="ECO:0000255" key="2">
    <source>
        <dbReference type="PROSITE-ProRule" id="PRU00283"/>
    </source>
</evidence>
<evidence type="ECO:0000269" key="3">
    <source>
    </source>
</evidence>
<evidence type="ECO:0000269" key="4">
    <source>
    </source>
</evidence>
<evidence type="ECO:0000269" key="5">
    <source>
    </source>
</evidence>
<evidence type="ECO:0000269" key="6">
    <source>
    </source>
</evidence>
<evidence type="ECO:0000269" key="7">
    <source>
    </source>
</evidence>
<evidence type="ECO:0000269" key="8">
    <source>
    </source>
</evidence>
<evidence type="ECO:0000305" key="9"/>
<evidence type="ECO:0000312" key="10">
    <source>
        <dbReference type="WormBase" id="M02B7.3b"/>
    </source>
</evidence>
<evidence type="ECO:0007829" key="11">
    <source>
        <dbReference type="PDB" id="7A3Z"/>
    </source>
</evidence>
<evidence type="ECO:0007829" key="12">
    <source>
        <dbReference type="PDB" id="7A40"/>
    </source>
</evidence>
<evidence type="ECO:0007829" key="13">
    <source>
        <dbReference type="PDB" id="7A5E"/>
    </source>
</evidence>
<name>OSM3_CAEEL</name>
<comment type="function">
    <text evidence="3 4 7 8">Kinesin motor protein which is required for the anterograde intraflagellar transport (IFT) along the middle segment of the sensory neuron cilia together with the kinesin II motor complex (composed of klp-11, klp-20 and kap-1) and on its own, is required for IFT along the distal segment (PubMed:17000880, PubMed:17420466). In addition, regulates the length of cilia (PubMed:17420466). May have a role during neurogenesis and axonal transport (PubMed:7690265, PubMed:7714894).</text>
</comment>
<comment type="subcellular location">
    <subcellularLocation>
        <location evidence="9">Cytoplasm</location>
        <location evidence="9">Cytoskeleton</location>
    </subcellularLocation>
    <subcellularLocation>
        <location evidence="4 6">Cell projection</location>
        <location evidence="4 6">Cilium</location>
    </subcellularLocation>
    <subcellularLocation>
        <location evidence="5">Cytoplasm</location>
        <location evidence="5">Cytoskeleton</location>
        <location evidence="5">Cilium axoneme</location>
    </subcellularLocation>
    <subcellularLocation>
        <location evidence="5">Cytoplasm</location>
        <location evidence="5">Cytoskeleton</location>
        <location evidence="5">Cilium basal body</location>
    </subcellularLocation>
    <text evidence="4 5">Localizes along the full cilium length.</text>
</comment>
<comment type="alternative products">
    <event type="alternative splicing"/>
    <isoform>
        <id>P46873-1</id>
        <name>b</name>
        <sequence type="displayed"/>
    </isoform>
    <isoform>
        <id>P46873-2</id>
        <name>a</name>
        <sequence type="described" ref="VSP_012172"/>
    </isoform>
</comment>
<comment type="tissue specificity">
    <text evidence="4 7 8">Expressed in an exclusive set of 26 chemosensory neurons whose dendritic endings are exposed to the external environment; six IL2 neurons of the inner labial sensilla, 8 pairs of amphid neurons in the head, and 2 pairs of phasmid neurons in the tail.</text>
</comment>
<comment type="disruption phenotype">
    <text evidence="7 8">Worms are defective in osmotic avoidance, chemotaxis and dauer formation.</text>
</comment>
<comment type="similarity">
    <text evidence="2">Belongs to the TRAFAC class myosin-kinesin ATPase superfamily. Kinesin family. Kinesin II subfamily.</text>
</comment>
<comment type="sequence caution" evidence="9">
    <conflict type="erroneous gene model prediction">
        <sequence resource="EMBL-CDS" id="BAA07612"/>
    </conflict>
</comment>
<comment type="sequence caution" evidence="9">
    <conflict type="frameshift">
        <sequence resource="EMBL-CDS" id="BAA07612"/>
    </conflict>
</comment>
<comment type="sequence caution" evidence="9">
    <conflict type="erroneous gene model prediction">
        <sequence resource="EMBL-CDS" id="BAA20996"/>
    </conflict>
</comment>
<comment type="sequence caution" evidence="9">
    <conflict type="frameshift">
        <sequence resource="EMBL-CDS" id="BAA20996"/>
    </conflict>
</comment>
<protein>
    <recommendedName>
        <fullName>Osmotic avoidance abnormal protein 3</fullName>
    </recommendedName>
    <alternativeName>
        <fullName>Kinesin-like protein osm-3</fullName>
    </alternativeName>
</protein>
<proteinExistence type="evidence at protein level"/>
<sequence length="699" mass="78779">MAESVRVAVRCRPFNQREKDLNTTLCVGMTPNVGQVNLNAPDGAAKDFTFDGAYFMDSTGEQIYNDIVFPLVENVIEGYNGTVFAYGQTGSGKTFSMQGIETIPAQRGVIPRAFDHIFTATATTENVKFLVHCSYLEIYNEEVRDLLGADNKQKLEIKEQPDRGVYVAGLSMHVCHDVPACKELMTRGFNNRHVGATLMNKDSSRSHSIFTVYVEGMTETGSIRMGKLNLVDLAGSERQSKTGATGDRLKEATKINLSLSALGNVISALVDGKSKHIPYRDSKLTRLLQDSLGGNTKTIMIACVSPSSDNYDETLSTLRYANRAKNIKNKPTINEDPKDALLREYQEEIARLKSMVQPGAVGVGAPAQDAFSIEEERKKLREEFEEAMNDLRGEYEREQTSKAELQKDLESLRADYERANANLDNLNPEEAAKKIQQLQDQFIGGEEAGNTQLKQKRMKQLKEAETKTQKLAAALNVHKDDPLLQVYSTTQEKLDAVTSQLEKEVKKSKGYEREIEDLHGEFELDRLDYLDTIRKQDQQLKLLMQIMDKIQPIIKKDTNYSNVDRIKKEAVWNEDESRWILPEMSMSRTILPLANNGYMQEPARQENTLLRSNFDDKLRERLAKSDSENLANSYFKPVKQINVINKYKSDQKLSTSKSLFPSKTPTFDGLVNGVVYTDALYERAQSAKRPPRLASLNPK</sequence>
<gene>
    <name evidence="10" type="primary">osm-3</name>
    <name evidence="10" type="ORF">M02B7.3</name>
</gene>
<feature type="chain" id="PRO_0000125402" description="Osmotic avoidance abnormal protein 3">
    <location>
        <begin position="1"/>
        <end position="699"/>
    </location>
</feature>
<feature type="domain" description="Kinesin motor" evidence="2">
    <location>
        <begin position="4"/>
        <end position="327"/>
    </location>
</feature>
<feature type="coiled-coil region" evidence="1">
    <location>
        <begin position="339"/>
        <end position="523"/>
    </location>
</feature>
<feature type="binding site" evidence="2">
    <location>
        <begin position="87"/>
        <end position="94"/>
    </location>
    <ligand>
        <name>ATP</name>
        <dbReference type="ChEBI" id="CHEBI:30616"/>
    </ligand>
</feature>
<feature type="site" description="Required for autoinhibition" evidence="3">
    <location>
        <position position="444"/>
    </location>
</feature>
<feature type="splice variant" id="VSP_012172" description="In isoform a." evidence="9">
    <location>
        <begin position="1"/>
        <end position="28"/>
    </location>
</feature>
<feature type="mutagenesis site" description="Loss of autoinhibition." evidence="3">
    <original>G</original>
    <variation>E</variation>
    <location>
        <position position="444"/>
    </location>
</feature>
<feature type="sequence conflict" description="In Ref. 1; BAA07612 and 3; BAA20996." evidence="9" ref="1 3">
    <original>DST</original>
    <variation>IRP</variation>
    <location>
        <begin position="57"/>
        <end position="59"/>
    </location>
</feature>
<feature type="sequence conflict" description="In Ref. 1; BAA07612 and 3; BAA20996." evidence="9" ref="1 3">
    <original>M</original>
    <variation>I</variation>
    <location>
        <position position="217"/>
    </location>
</feature>
<feature type="sequence conflict" description="In Ref. 1; BAA07612." evidence="9" ref="1">
    <original>L</original>
    <variation>S</variation>
    <location>
        <position position="680"/>
    </location>
</feature>
<feature type="strand" evidence="13">
    <location>
        <begin position="6"/>
        <end position="11"/>
    </location>
</feature>
<feature type="helix" evidence="13">
    <location>
        <begin position="16"/>
        <end position="20"/>
    </location>
</feature>
<feature type="strand" evidence="13">
    <location>
        <begin position="27"/>
        <end position="30"/>
    </location>
</feature>
<feature type="helix" evidence="13">
    <location>
        <begin position="31"/>
        <end position="33"/>
    </location>
</feature>
<feature type="strand" evidence="13">
    <location>
        <begin position="35"/>
        <end position="39"/>
    </location>
</feature>
<feature type="strand" evidence="13">
    <location>
        <begin position="45"/>
        <end position="49"/>
    </location>
</feature>
<feature type="strand" evidence="13">
    <location>
        <begin position="51"/>
        <end position="54"/>
    </location>
</feature>
<feature type="helix" evidence="13">
    <location>
        <begin position="60"/>
        <end position="66"/>
    </location>
</feature>
<feature type="helix" evidence="13">
    <location>
        <begin position="68"/>
        <end position="77"/>
    </location>
</feature>
<feature type="strand" evidence="13">
    <location>
        <begin position="80"/>
        <end position="86"/>
    </location>
</feature>
<feature type="helix" evidence="13">
    <location>
        <begin position="93"/>
        <end position="97"/>
    </location>
</feature>
<feature type="strand" evidence="11">
    <location>
        <begin position="101"/>
        <end position="103"/>
    </location>
</feature>
<feature type="helix" evidence="13">
    <location>
        <begin position="104"/>
        <end position="106"/>
    </location>
</feature>
<feature type="helix" evidence="13">
    <location>
        <begin position="109"/>
        <end position="122"/>
    </location>
</feature>
<feature type="strand" evidence="13">
    <location>
        <begin position="125"/>
        <end position="139"/>
    </location>
</feature>
<feature type="strand" evidence="13">
    <location>
        <begin position="142"/>
        <end position="149"/>
    </location>
</feature>
<feature type="strand" evidence="13">
    <location>
        <begin position="155"/>
        <end position="160"/>
    </location>
</feature>
<feature type="turn" evidence="13">
    <location>
        <begin position="161"/>
        <end position="163"/>
    </location>
</feature>
<feature type="strand" evidence="13">
    <location>
        <begin position="164"/>
        <end position="168"/>
    </location>
</feature>
<feature type="strand" evidence="12">
    <location>
        <begin position="173"/>
        <end position="177"/>
    </location>
</feature>
<feature type="helix" evidence="13">
    <location>
        <begin position="178"/>
        <end position="191"/>
    </location>
</feature>
<feature type="strand" evidence="13">
    <location>
        <begin position="194"/>
        <end position="197"/>
    </location>
</feature>
<feature type="strand" evidence="13">
    <location>
        <begin position="200"/>
        <end position="204"/>
    </location>
</feature>
<feature type="strand" evidence="13">
    <location>
        <begin position="206"/>
        <end position="218"/>
    </location>
</feature>
<feature type="strand" evidence="13">
    <location>
        <begin position="223"/>
        <end position="232"/>
    </location>
</feature>
<feature type="helix" evidence="13">
    <location>
        <begin position="239"/>
        <end position="242"/>
    </location>
</feature>
<feature type="helix" evidence="13">
    <location>
        <begin position="246"/>
        <end position="270"/>
    </location>
</feature>
<feature type="helix" evidence="13">
    <location>
        <begin position="279"/>
        <end position="281"/>
    </location>
</feature>
<feature type="helix" evidence="13">
    <location>
        <begin position="283"/>
        <end position="287"/>
    </location>
</feature>
<feature type="turn" evidence="13">
    <location>
        <begin position="288"/>
        <end position="293"/>
    </location>
</feature>
<feature type="strand" evidence="13">
    <location>
        <begin position="294"/>
        <end position="304"/>
    </location>
</feature>
<feature type="helix" evidence="13">
    <location>
        <begin position="308"/>
        <end position="310"/>
    </location>
</feature>
<feature type="helix" evidence="13">
    <location>
        <begin position="311"/>
        <end position="324"/>
    </location>
</feature>
<keyword id="KW-0002">3D-structure</keyword>
<keyword id="KW-0025">Alternative splicing</keyword>
<keyword id="KW-0067">ATP-binding</keyword>
<keyword id="KW-0966">Cell projection</keyword>
<keyword id="KW-0175">Coiled coil</keyword>
<keyword id="KW-0963">Cytoplasm</keyword>
<keyword id="KW-0206">Cytoskeleton</keyword>
<keyword id="KW-0493">Microtubule</keyword>
<keyword id="KW-0505">Motor protein</keyword>
<keyword id="KW-0547">Nucleotide-binding</keyword>
<keyword id="KW-1185">Reference proteome</keyword>